<comment type="function">
    <text evidence="2 5 6 9 10 11">FAD-binding monooxygenase; part of the gene cluster that mediates the biosynthesis of paraherquonin, a meroterpenoid with a unique, highly congested hexacyclic molecular architecture (PubMed:27602587). The first step of the pathway is the synthesis of 3,5-dimethylorsellinic acid (DMOA) by the polyketide synthase prhL (By similarity). Synthesis of DMOA is followed by farnesylation by the prenyltransferase prhE, methylesterification by the methyl-transferase prhM, epoxidation of the prenyl chain by the flavin-dependent monooxygenase prhF, and cyclization of the farnesyl moiety by the terpene cyclase prhH, to yield the tetracyclic intermediate, protoaustinoid A (By similarity). The short chain dehydrogenase prhI then oxidizes the C-3 alcohol group of the terpene cyclase product to transform protoaustinoid A into protoaustinoid B (PubMed:27602587). The FAD-binding monooxygenase prhJ catalyzes the oxidation of protoaustinoid B into preaustinoid A which is further oxidized into preaustinoid A1 by FAD-binding monooxygenase phrK (PubMed:27602587). Finally, prhA leads to berkeleydione via the berkeleyone B intermediate (PubMed:27602587, PubMed:29317628). PrhA is a multifunctional dioxygenase that first desaturates at C5-C6 to form berkeleyone B, followed by rearrangement of the A/B-ring to form the cycloheptadiene moiety in berkeleydione (PubMed:27602587, PubMed:29317628). Berkeleydione serves as the key intermediate for the biosynthesis of paraherquonin as well as many other meroterpenoids (Probable). The cytochrome P450 monooxygenases prhB, prhD, and prhN, as well as the isomerase prhC, are probably involved in the late stage of paraherquonin biosynthesis, after the production of berkeleydione (Probable). Especially prhC might be a multifunctional enzyme that catalyzes the D-ring expansion via intramolecular methoxy rearrangement, as well as the hydrolysis of the expanded D-ring (Probable).</text>
</comment>
<comment type="catalytic activity">
    <reaction evidence="5">
        <text>preaustinoid A + AH2 + O2 = preaustinoid A1 + A + H2O</text>
        <dbReference type="Rhea" id="RHEA:65168"/>
        <dbReference type="ChEBI" id="CHEBI:13193"/>
        <dbReference type="ChEBI" id="CHEBI:15377"/>
        <dbReference type="ChEBI" id="CHEBI:15379"/>
        <dbReference type="ChEBI" id="CHEBI:17499"/>
        <dbReference type="ChEBI" id="CHEBI:69023"/>
        <dbReference type="ChEBI" id="CHEBI:69026"/>
    </reaction>
    <physiologicalReaction direction="left-to-right" evidence="5">
        <dbReference type="Rhea" id="RHEA:65169"/>
    </physiologicalReaction>
</comment>
<comment type="cofactor">
    <cofactor evidence="1">
        <name>FAD</name>
        <dbReference type="ChEBI" id="CHEBI:57692"/>
    </cofactor>
    <text evidence="1">Binds 1 FAD per subunit.</text>
</comment>
<comment type="pathway">
    <text evidence="5">Secondary metabolite biosynthesis; terpenoid biosynthesis.</text>
</comment>
<comment type="subcellular location">
    <subcellularLocation>
        <location evidence="3">Membrane</location>
        <topology evidence="3">Single-pass membrane protein</topology>
    </subcellularLocation>
</comment>
<comment type="similarity">
    <text evidence="8">Belongs to the FAD-binding monooxygenase family.</text>
</comment>
<dbReference type="EC" id="1.14.13.-" evidence="5"/>
<dbReference type="EMBL" id="LC127182">
    <property type="protein sequence ID" value="BAV69312.1"/>
    <property type="molecule type" value="Genomic_DNA"/>
</dbReference>
<dbReference type="SMR" id="A0A1E1FFN4"/>
<dbReference type="GlyCosmos" id="A0A1E1FFN4">
    <property type="glycosylation" value="4 sites, No reported glycans"/>
</dbReference>
<dbReference type="UniPathway" id="UPA00213"/>
<dbReference type="GO" id="GO:0016020">
    <property type="term" value="C:membrane"/>
    <property type="evidence" value="ECO:0007669"/>
    <property type="project" value="UniProtKB-SubCell"/>
</dbReference>
<dbReference type="GO" id="GO:0050660">
    <property type="term" value="F:flavin adenine dinucleotide binding"/>
    <property type="evidence" value="ECO:0007669"/>
    <property type="project" value="InterPro"/>
</dbReference>
<dbReference type="GO" id="GO:0004497">
    <property type="term" value="F:monooxygenase activity"/>
    <property type="evidence" value="ECO:0000314"/>
    <property type="project" value="GO_Central"/>
</dbReference>
<dbReference type="GO" id="GO:0004499">
    <property type="term" value="F:N,N-dimethylaniline monooxygenase activity"/>
    <property type="evidence" value="ECO:0007669"/>
    <property type="project" value="InterPro"/>
</dbReference>
<dbReference type="GO" id="GO:0050661">
    <property type="term" value="F:NADP binding"/>
    <property type="evidence" value="ECO:0007669"/>
    <property type="project" value="InterPro"/>
</dbReference>
<dbReference type="GO" id="GO:0140874">
    <property type="term" value="P:paraherquonin biosynthetic process"/>
    <property type="evidence" value="ECO:0000314"/>
    <property type="project" value="GO_Central"/>
</dbReference>
<dbReference type="FunFam" id="3.50.50.60:FF:000518">
    <property type="entry name" value="Steroid monooxygenase, putative"/>
    <property type="match status" value="1"/>
</dbReference>
<dbReference type="Gene3D" id="3.50.50.60">
    <property type="entry name" value="FAD/NAD(P)-binding domain"/>
    <property type="match status" value="2"/>
</dbReference>
<dbReference type="InterPro" id="IPR050775">
    <property type="entry name" value="FAD-binding_Monooxygenases"/>
</dbReference>
<dbReference type="InterPro" id="IPR036188">
    <property type="entry name" value="FAD/NAD-bd_sf"/>
</dbReference>
<dbReference type="InterPro" id="IPR020946">
    <property type="entry name" value="Flavin_mOase-like"/>
</dbReference>
<dbReference type="PANTHER" id="PTHR43098:SF2">
    <property type="entry name" value="FAD-BINDING MONOOXYGENASE AUSB-RELATED"/>
    <property type="match status" value="1"/>
</dbReference>
<dbReference type="PANTHER" id="PTHR43098">
    <property type="entry name" value="L-ORNITHINE N(5)-MONOOXYGENASE-RELATED"/>
    <property type="match status" value="1"/>
</dbReference>
<dbReference type="Pfam" id="PF00743">
    <property type="entry name" value="FMO-like"/>
    <property type="match status" value="1"/>
</dbReference>
<dbReference type="Pfam" id="PF13450">
    <property type="entry name" value="NAD_binding_8"/>
    <property type="match status" value="1"/>
</dbReference>
<dbReference type="PRINTS" id="PR00411">
    <property type="entry name" value="PNDRDTASEI"/>
</dbReference>
<dbReference type="SUPFAM" id="SSF51905">
    <property type="entry name" value="FAD/NAD(P)-binding domain"/>
    <property type="match status" value="1"/>
</dbReference>
<gene>
    <name evidence="7" type="primary">prhK</name>
</gene>
<accession>A0A1E1FFN4</accession>
<proteinExistence type="evidence at protein level"/>
<reference key="1">
    <citation type="journal article" date="2016" name="J. Am. Chem. Soc.">
        <title>Discovery of key dioxygenases that diverged the paraherquonin and acetoxydehydroaustin pathways in Penicillium brasilianum.</title>
        <authorList>
            <person name="Matsuda Y."/>
            <person name="Iwabuchi T."/>
            <person name="Fujimoto T."/>
            <person name="Awakawa T."/>
            <person name="Nakashima Y."/>
            <person name="Mori T."/>
            <person name="Zhang H."/>
            <person name="Hayashi F."/>
            <person name="Abe I."/>
        </authorList>
    </citation>
    <scope>NUCLEOTIDE SEQUENCE [GENOMIC DNA]</scope>
    <scope>FUNCTION</scope>
    <scope>CATALYTIC ACTIVITY</scope>
    <scope>PATHWAY</scope>
    <source>
        <strain>ATCC 22354 / NBRC 6234 / CBS 338.59 / FRR 3454 / IMI 68220</strain>
    </source>
</reference>
<reference key="2">
    <citation type="journal article" date="2017" name="Nat. Chem. Biol.">
        <title>Molecular basis for the unusual ring reconstruction in fungal meroterpenoid biogenesis.</title>
        <authorList>
            <person name="Mori T."/>
            <person name="Iwabuchi T."/>
            <person name="Hoshino S."/>
            <person name="Wang H."/>
            <person name="Matsuda Y."/>
            <person name="Abe I."/>
        </authorList>
    </citation>
    <scope>FUNCTION</scope>
</reference>
<reference key="3">
    <citation type="journal article" date="2018" name="Nat. Commun.">
        <title>Structure function and engineering of multifunctional non-heme iron dependent oxygenases in fungal meroterpenoid biosynthesis.</title>
        <authorList>
            <person name="Nakashima Y."/>
            <person name="Mori T."/>
            <person name="Nakamura H."/>
            <person name="Awakawa T."/>
            <person name="Hoshino S."/>
            <person name="Senda M."/>
            <person name="Senda T."/>
            <person name="Abe I."/>
        </authorList>
    </citation>
    <scope>FUNCTION</scope>
</reference>
<sequence>MTISTTALGGGATTATRKQVEAKYEEERQIQLQSRGMVEDIEITRNASFEQFAKDPWAAPKQVDVEIQRERLLQQAHHKIIIIGAGFGGLLFAVRLIQTGKFKADDIILVDSAAGFGGTWYWNRYPGLMCDTESYIYMPLLEETGYMPRNKYASGNEIREHAERIAEKYALSERAIFRTVVQSLDWEEEGKVWKIAGVKLGKNDECQQPFQLIADFPIMASGAFASPRVPNYPNIFDYKGKLFHTARWDYKYTGGSIENPKMSGLADKRVAIIGTGATAIQIVPQLAKNSRELFVFQRTPAAVDVRNNYPTDPARFKSEIQGDGPGWQRRRQINFNAFTCNEKTLPTDNKIGDGWTRMPSFSVLIGGPQSLEPDYIDQIRPIDMARQSEIRSRVHKLVESTAIADSLTPWYPGWCKRPCFHDEYLQSFNSSNVQLVDIRHDGISRFTPNGLVANGVEYELDAIILSTGYTVPVTRASPSGRANITVTGRRGVTMEEKWANGLATLHGVMTRDLPNLFFAGTSQAGACVNLTYALDQNAIHVAHILSEAVKRQPSDCTKLVIQPTHEGEEAWTMEILQRAAGFRGIAGCTPGYLNGYGMDASSLKPEEQMNMARLAAWGEGIASYVDALEGWRSEGQLEGVEMTFFA</sequence>
<keyword id="KW-0274">FAD</keyword>
<keyword id="KW-0285">Flavoprotein</keyword>
<keyword id="KW-0325">Glycoprotein</keyword>
<keyword id="KW-0472">Membrane</keyword>
<keyword id="KW-0503">Monooxygenase</keyword>
<keyword id="KW-0521">NADP</keyword>
<keyword id="KW-0560">Oxidoreductase</keyword>
<keyword id="KW-0812">Transmembrane</keyword>
<keyword id="KW-1133">Transmembrane helix</keyword>
<feature type="chain" id="PRO_0000449175" description="FAD-binding monooxygenase prhK">
    <location>
        <begin position="1"/>
        <end position="646"/>
    </location>
</feature>
<feature type="transmembrane region" description="Helical" evidence="3">
    <location>
        <begin position="80"/>
        <end position="97"/>
    </location>
</feature>
<feature type="binding site" evidence="1">
    <location>
        <begin position="119"/>
        <end position="122"/>
    </location>
    <ligand>
        <name>FAD</name>
        <dbReference type="ChEBI" id="CHEBI:57692"/>
    </ligand>
</feature>
<feature type="binding site" evidence="1">
    <location>
        <begin position="129"/>
        <end position="131"/>
    </location>
    <ligand>
        <name>NADP(+)</name>
        <dbReference type="ChEBI" id="CHEBI:58349"/>
    </ligand>
</feature>
<feature type="binding site" evidence="1">
    <location>
        <begin position="131"/>
        <end position="132"/>
    </location>
    <ligand>
        <name>FAD</name>
        <dbReference type="ChEBI" id="CHEBI:57692"/>
    </ligand>
</feature>
<feature type="binding site" evidence="1">
    <location>
        <position position="137"/>
    </location>
    <ligand>
        <name>FAD</name>
        <dbReference type="ChEBI" id="CHEBI:57692"/>
    </ligand>
</feature>
<feature type="binding site" evidence="1">
    <location>
        <begin position="275"/>
        <end position="281"/>
    </location>
    <ligand>
        <name>NADP(+)</name>
        <dbReference type="ChEBI" id="CHEBI:58349"/>
    </ligand>
</feature>
<feature type="binding site" evidence="1">
    <location>
        <begin position="298"/>
        <end position="299"/>
    </location>
    <ligand>
        <name>NADP(+)</name>
        <dbReference type="ChEBI" id="CHEBI:58349"/>
    </ligand>
</feature>
<feature type="site" description="Transition state stabilizer" evidence="1">
    <location>
        <position position="417"/>
    </location>
</feature>
<feature type="glycosylation site" description="N-linked (GlcNAc...) asparagine" evidence="4">
    <location>
        <position position="46"/>
    </location>
</feature>
<feature type="glycosylation site" description="N-linked (GlcNAc...) asparagine" evidence="4">
    <location>
        <position position="429"/>
    </location>
</feature>
<feature type="glycosylation site" description="N-linked (GlcNAc...) asparagine" evidence="4">
    <location>
        <position position="483"/>
    </location>
</feature>
<feature type="glycosylation site" description="N-linked (GlcNAc...) asparagine" evidence="4">
    <location>
        <position position="529"/>
    </location>
</feature>
<evidence type="ECO:0000250" key="1">
    <source>
        <dbReference type="UniProtKB" id="H3JQW0"/>
    </source>
</evidence>
<evidence type="ECO:0000250" key="2">
    <source>
        <dbReference type="UniProtKB" id="Q5ATJ7"/>
    </source>
</evidence>
<evidence type="ECO:0000255" key="3"/>
<evidence type="ECO:0000255" key="4">
    <source>
        <dbReference type="PROSITE-ProRule" id="PRU00498"/>
    </source>
</evidence>
<evidence type="ECO:0000269" key="5">
    <source>
    </source>
</evidence>
<evidence type="ECO:0000269" key="6">
    <source>
    </source>
</evidence>
<evidence type="ECO:0000303" key="7">
    <source>
    </source>
</evidence>
<evidence type="ECO:0000305" key="8"/>
<evidence type="ECO:0000305" key="9">
    <source>
    </source>
</evidence>
<evidence type="ECO:0000305" key="10">
    <source>
    </source>
</evidence>
<evidence type="ECO:0000305" key="11">
    <source>
    </source>
</evidence>
<organism>
    <name type="scientific">Penicillium brasilianum</name>
    <dbReference type="NCBI Taxonomy" id="104259"/>
    <lineage>
        <taxon>Eukaryota</taxon>
        <taxon>Fungi</taxon>
        <taxon>Dikarya</taxon>
        <taxon>Ascomycota</taxon>
        <taxon>Pezizomycotina</taxon>
        <taxon>Eurotiomycetes</taxon>
        <taxon>Eurotiomycetidae</taxon>
        <taxon>Eurotiales</taxon>
        <taxon>Aspergillaceae</taxon>
        <taxon>Penicillium</taxon>
    </lineage>
</organism>
<protein>
    <recommendedName>
        <fullName evidence="7">FAD-binding monooxygenase prhK</fullName>
        <ecNumber evidence="5">1.14.13.-</ecNumber>
    </recommendedName>
    <alternativeName>
        <fullName evidence="7">Paraherquonin biosynthesis cluster protein K</fullName>
    </alternativeName>
</protein>
<name>PRHK_PENBI</name>